<proteinExistence type="inferred from homology"/>
<dbReference type="EMBL" id="AY911314">
    <property type="protein sequence ID" value="AAW82082.1"/>
    <property type="molecule type" value="mRNA"/>
</dbReference>
<dbReference type="EMBL" id="BC111655">
    <property type="protein sequence ID" value="AAI11656.1"/>
    <property type="molecule type" value="mRNA"/>
</dbReference>
<dbReference type="RefSeq" id="NP_001020521.1">
    <property type="nucleotide sequence ID" value="NM_001025350.3"/>
</dbReference>
<dbReference type="RefSeq" id="XP_005211072.1">
    <property type="nucleotide sequence ID" value="XM_005211015.5"/>
</dbReference>
<dbReference type="SMR" id="Q56K13"/>
<dbReference type="FunCoup" id="Q56K13">
    <property type="interactions" value="2739"/>
</dbReference>
<dbReference type="STRING" id="9913.ENSBTAP00000012920"/>
<dbReference type="PaxDb" id="9913-ENSBTAP00000012920"/>
<dbReference type="Ensembl" id="ENSBTAT00000097068.1">
    <property type="protein sequence ID" value="ENSBTAP00000088402.1"/>
    <property type="gene ID" value="ENSBTAG00000060547.1"/>
</dbReference>
<dbReference type="GeneID" id="574400"/>
<dbReference type="KEGG" id="bta:574400"/>
<dbReference type="CTD" id="83443"/>
<dbReference type="VEuPathDB" id="HostDB:ENSBTAG00000009795"/>
<dbReference type="eggNOG" id="KOG3485">
    <property type="taxonomic scope" value="Eukaryota"/>
</dbReference>
<dbReference type="GeneTree" id="ENSGT00390000013215"/>
<dbReference type="HOGENOM" id="CLU_138804_3_1_1"/>
<dbReference type="InParanoid" id="Q56K13"/>
<dbReference type="OMA" id="YDRFNIH"/>
<dbReference type="OrthoDB" id="274726at2759"/>
<dbReference type="TreeFam" id="TF300117"/>
<dbReference type="Reactome" id="R-BTA-72163">
    <property type="pathway name" value="mRNA Splicing - Major Pathway"/>
</dbReference>
<dbReference type="Reactome" id="R-BTA-72165">
    <property type="pathway name" value="mRNA Splicing - Minor Pathway"/>
</dbReference>
<dbReference type="Proteomes" id="UP000009136">
    <property type="component" value="Chromosome 9"/>
</dbReference>
<dbReference type="Bgee" id="ENSBTAG00000009795">
    <property type="expression patterns" value="Expressed in oocyte and 107 other cell types or tissues"/>
</dbReference>
<dbReference type="GO" id="GO:0005654">
    <property type="term" value="C:nucleoplasm"/>
    <property type="evidence" value="ECO:0007669"/>
    <property type="project" value="Ensembl"/>
</dbReference>
<dbReference type="GO" id="GO:0005634">
    <property type="term" value="C:nucleus"/>
    <property type="evidence" value="ECO:0000250"/>
    <property type="project" value="UniProtKB"/>
</dbReference>
<dbReference type="GO" id="GO:0071011">
    <property type="term" value="C:precatalytic spliceosome"/>
    <property type="evidence" value="ECO:0000318"/>
    <property type="project" value="GO_Central"/>
</dbReference>
<dbReference type="GO" id="GO:0005689">
    <property type="term" value="C:U12-type spliceosomal complex"/>
    <property type="evidence" value="ECO:0007669"/>
    <property type="project" value="Ensembl"/>
</dbReference>
<dbReference type="GO" id="GO:0005686">
    <property type="term" value="C:U2 snRNP"/>
    <property type="evidence" value="ECO:0000318"/>
    <property type="project" value="GO_Central"/>
</dbReference>
<dbReference type="GO" id="GO:0071005">
    <property type="term" value="C:U2-type precatalytic spliceosome"/>
    <property type="evidence" value="ECO:0000250"/>
    <property type="project" value="UniProtKB"/>
</dbReference>
<dbReference type="GO" id="GO:0005684">
    <property type="term" value="C:U2-type spliceosomal complex"/>
    <property type="evidence" value="ECO:0000250"/>
    <property type="project" value="UniProtKB"/>
</dbReference>
<dbReference type="GO" id="GO:0003723">
    <property type="term" value="F:RNA binding"/>
    <property type="evidence" value="ECO:0007669"/>
    <property type="project" value="UniProtKB-KW"/>
</dbReference>
<dbReference type="GO" id="GO:1990935">
    <property type="term" value="F:splicing factor binding"/>
    <property type="evidence" value="ECO:0007669"/>
    <property type="project" value="Ensembl"/>
</dbReference>
<dbReference type="GO" id="GO:0000398">
    <property type="term" value="P:mRNA splicing, via spliceosome"/>
    <property type="evidence" value="ECO:0000250"/>
    <property type="project" value="UniProtKB"/>
</dbReference>
<dbReference type="InterPro" id="IPR009846">
    <property type="entry name" value="SF3b5/RDS3-10"/>
</dbReference>
<dbReference type="InterPro" id="IPR017089">
    <property type="entry name" value="Splicing_factor_3B_subunit_5"/>
</dbReference>
<dbReference type="PANTHER" id="PTHR20978">
    <property type="entry name" value="SPLICING FACTOR 3B SUBUNIT 5"/>
    <property type="match status" value="1"/>
</dbReference>
<dbReference type="PANTHER" id="PTHR20978:SF0">
    <property type="entry name" value="SPLICING FACTOR 3B SUBUNIT 5"/>
    <property type="match status" value="1"/>
</dbReference>
<dbReference type="Pfam" id="PF07189">
    <property type="entry name" value="SF3b10"/>
    <property type="match status" value="1"/>
</dbReference>
<dbReference type="PIRSF" id="PIRSF037010">
    <property type="entry name" value="Splicing_factor_3B_subunit_5"/>
    <property type="match status" value="1"/>
</dbReference>
<reference key="1">
    <citation type="submission" date="2005-01" db="EMBL/GenBank/DDBJ databases">
        <title>Analysis of sequences obtained from constructed full-length bovine cDNA libraries.</title>
        <authorList>
            <person name="Yu J."/>
            <person name="Meng Y."/>
            <person name="Wang Z."/>
            <person name="Hansen C."/>
            <person name="Li C."/>
            <person name="Moore S.S."/>
        </authorList>
    </citation>
    <scope>NUCLEOTIDE SEQUENCE [LARGE SCALE MRNA]</scope>
    <source>
        <tissue>Lymphoid epithelium</tissue>
    </source>
</reference>
<reference key="2">
    <citation type="submission" date="2006-01" db="EMBL/GenBank/DDBJ databases">
        <authorList>
            <consortium name="NIH - Mammalian Gene Collection (MGC) project"/>
        </authorList>
    </citation>
    <scope>NUCLEOTIDE SEQUENCE [LARGE SCALE MRNA]</scope>
    <source>
        <strain>Hereford</strain>
        <tissue>Testis</tissue>
    </source>
</reference>
<gene>
    <name type="primary">SF3B5</name>
</gene>
<accession>Q56K13</accession>
<sequence length="86" mass="10135">MTDRYTIHSQLEHLQSKYIGTGHADTTKWEWLVNQHRDSYCSYMGHFDLLNYFAIAENESKARVRFNLMEKMLQPCGPPADKPEEN</sequence>
<comment type="function">
    <text evidence="1">Component of the 17S U2 SnRNP complex of the spliceosome, a large ribonucleoprotein complex that removes introns from transcribed pre-mRNAs. The 17S U2 SnRNP complex (1) directly participates in early spliceosome assembly and (2) mediates recognition of the intron branch site during pre-mRNA splicing by promoting the selection of the pre-mRNA branch-site adenosine, the nucleophile for the first step of splicing. Within the 17S U2 SnRNP complex, SF3B4 is part of the SF3B subcomplex, which is required for 'A' complex assembly formed by the stable binding of U2 snRNP to the branchpoint sequence in pre-mRNA. Sequence independent binding of SF3A and SF3B subcomplexes upstream of the branch site is essential, it may anchor U2 snRNP to the pre-mRNA. Also acts as a component of the minor spliceosome, which is involved in the splicing of U12-type introns in pre-mRNAs.</text>
</comment>
<comment type="subunit">
    <text evidence="1">Component of the 17S U2 SnRNP complex, a ribonucleoprotein complex that contains small nuclear RNA (snRNA) U2 and a number of specific proteins. Part of the SF3B subcomplex of the 17S U2 SnRNP complex. SF3B associates with the splicing subcomplex SF3A and a 12S RNA unit to form the U2 small nuclear ribonucleoproteins complex (U2 snRNP). Within the SF3B subcomplex, interacts directly with SF3B1 (via HEAT domain) and SF3B3. Component of the minor spliceosome, which splices U12-type introns.</text>
</comment>
<comment type="subcellular location">
    <subcellularLocation>
        <location evidence="1">Nucleus</location>
    </subcellularLocation>
</comment>
<comment type="similarity">
    <text evidence="2">Belongs to the SF3B5 family.</text>
</comment>
<evidence type="ECO:0000250" key="1">
    <source>
        <dbReference type="UniProtKB" id="Q9BWJ5"/>
    </source>
</evidence>
<evidence type="ECO:0000305" key="2"/>
<feature type="initiator methionine" description="Removed" evidence="1">
    <location>
        <position position="1"/>
    </location>
</feature>
<feature type="chain" id="PRO_0000240345" description="Splicing factor 3B subunit 5">
    <location>
        <begin position="2"/>
        <end position="86"/>
    </location>
</feature>
<feature type="region of interest" description="Interaction with SF3B1 and SF3B3" evidence="1">
    <location>
        <begin position="15"/>
        <end position="76"/>
    </location>
</feature>
<feature type="site" description="Interaction with RNA" evidence="1">
    <location>
        <position position="5"/>
    </location>
</feature>
<feature type="site" description="Interaction with RNA" evidence="1">
    <location>
        <position position="20"/>
    </location>
</feature>
<feature type="modified residue" description="N-acetylthreonine" evidence="1">
    <location>
        <position position="2"/>
    </location>
</feature>
<feature type="modified residue" description="Phosphoserine" evidence="1">
    <location>
        <position position="9"/>
    </location>
</feature>
<feature type="modified residue" description="N6-acetyllysine" evidence="1">
    <location>
        <position position="17"/>
    </location>
</feature>
<organism>
    <name type="scientific">Bos taurus</name>
    <name type="common">Bovine</name>
    <dbReference type="NCBI Taxonomy" id="9913"/>
    <lineage>
        <taxon>Eukaryota</taxon>
        <taxon>Metazoa</taxon>
        <taxon>Chordata</taxon>
        <taxon>Craniata</taxon>
        <taxon>Vertebrata</taxon>
        <taxon>Euteleostomi</taxon>
        <taxon>Mammalia</taxon>
        <taxon>Eutheria</taxon>
        <taxon>Laurasiatheria</taxon>
        <taxon>Artiodactyla</taxon>
        <taxon>Ruminantia</taxon>
        <taxon>Pecora</taxon>
        <taxon>Bovidae</taxon>
        <taxon>Bovinae</taxon>
        <taxon>Bos</taxon>
    </lineage>
</organism>
<name>SF3B5_BOVIN</name>
<keyword id="KW-0007">Acetylation</keyword>
<keyword id="KW-0507">mRNA processing</keyword>
<keyword id="KW-0508">mRNA splicing</keyword>
<keyword id="KW-0539">Nucleus</keyword>
<keyword id="KW-0597">Phosphoprotein</keyword>
<keyword id="KW-1185">Reference proteome</keyword>
<keyword id="KW-0694">RNA-binding</keyword>
<keyword id="KW-0747">Spliceosome</keyword>
<protein>
    <recommendedName>
        <fullName>Splicing factor 3B subunit 5</fullName>
        <shortName>SF3b5</shortName>
    </recommendedName>
    <alternativeName>
        <fullName>Pre-mRNA-splicing factor SF3b 10 kDa subunit</fullName>
    </alternativeName>
</protein>